<gene>
    <name evidence="5" type="primary">RPL27B</name>
    <name type="synonym">RPL27</name>
    <name type="ordered locus">YDR471W</name>
    <name type="ORF">D8035.14</name>
</gene>
<comment type="function">
    <text evidence="7">Component of the ribosome, a large ribonucleoprotein complex responsible for the synthesis of proteins in the cell. The small ribosomal subunit (SSU) binds messenger RNAs (mRNAs) and translates the encoded message by selecting cognate aminoacyl-transfer RNA (tRNA) molecules. The large subunit (LSU) contains the ribosomal catalytic site termed the peptidyl transferase center (PTC), which catalyzes the formation of peptide bonds, thereby polymerizing the amino acids delivered by tRNAs into a polypeptide chain. The nascent polypeptides leave the ribosome through a tunnel in the LSU and interact with protein factors that function in enzymatic processing, targeting, and the membrane insertion of nascent chains at the exit of the ribosomal tunnel.</text>
</comment>
<comment type="subunit">
    <text evidence="3 8">Component of the large ribosomal subunit (LSU). Mature yeast ribosomes consist of a small (40S) and a large (60S) subunit. The 40S small subunit contains 1 molecule of ribosomal RNA (18S rRNA) and 33 different proteins (encoded by 57 genes). The large 60S subunit contains 3 rRNA molecules (25S, 5.8S and 5S rRNA) and 46 different proteins (encoded by 81 genes) (PubMed:22096102, PubMed:9559554).</text>
</comment>
<comment type="subcellular location">
    <subcellularLocation>
        <location evidence="1 3">Cytoplasm</location>
    </subcellularLocation>
</comment>
<comment type="miscellaneous">
    <text evidence="2">Present with 22900 molecules/cell in log phase SD medium.</text>
</comment>
<comment type="miscellaneous">
    <text evidence="6">There are 2 genes for eL27 in yeast.</text>
</comment>
<comment type="similarity">
    <text evidence="6">Belongs to the eukaryotic ribosomal protein eL27 family.</text>
</comment>
<sequence length="136" mass="15505">MAKFLKAGKVAVVVRGRYAGKKVVIVKPHDEGSKSHPFGHALVAGIERYPSKVTKKHGAKKVAKRTKIKPFIKVVNYNHLLPTRYTLDVEAFKSVVSTETFEQPSQREEAKKVVKKAFEERHQAGKNQWFFSKLRF</sequence>
<accession>P0C2H7</accession>
<accession>D6VT95</accession>
<accession>P38706</accession>
<feature type="chain" id="PRO_0000278967" description="Large ribosomal subunit protein eL27B">
    <location>
        <begin position="1"/>
        <end position="136"/>
    </location>
</feature>
<proteinExistence type="evidence at protein level"/>
<keyword id="KW-0963">Cytoplasm</keyword>
<keyword id="KW-1185">Reference proteome</keyword>
<keyword id="KW-0687">Ribonucleoprotein</keyword>
<keyword id="KW-0689">Ribosomal protein</keyword>
<organism>
    <name type="scientific">Saccharomyces cerevisiae (strain ATCC 204508 / S288c)</name>
    <name type="common">Baker's yeast</name>
    <dbReference type="NCBI Taxonomy" id="559292"/>
    <lineage>
        <taxon>Eukaryota</taxon>
        <taxon>Fungi</taxon>
        <taxon>Dikarya</taxon>
        <taxon>Ascomycota</taxon>
        <taxon>Saccharomycotina</taxon>
        <taxon>Saccharomycetes</taxon>
        <taxon>Saccharomycetales</taxon>
        <taxon>Saccharomycetaceae</taxon>
        <taxon>Saccharomyces</taxon>
    </lineage>
</organism>
<dbReference type="EMBL" id="U33050">
    <property type="protein sequence ID" value="AAB64935.1"/>
    <property type="molecule type" value="Genomic_DNA"/>
</dbReference>
<dbReference type="EMBL" id="BK006938">
    <property type="protein sequence ID" value="DAA12305.1"/>
    <property type="molecule type" value="Genomic_DNA"/>
</dbReference>
<dbReference type="PIR" id="S69638">
    <property type="entry name" value="S69638"/>
</dbReference>
<dbReference type="RefSeq" id="NP_010759.1">
    <property type="nucleotide sequence ID" value="NM_001180779.1"/>
</dbReference>
<dbReference type="SMR" id="P0C2H7"/>
<dbReference type="BioGRID" id="32524">
    <property type="interactions" value="250"/>
</dbReference>
<dbReference type="ComplexPortal" id="CPX-1601">
    <property type="entry name" value="60S cytosolic large ribosomal subunit"/>
</dbReference>
<dbReference type="FunCoup" id="P0C2H7">
    <property type="interactions" value="929"/>
</dbReference>
<dbReference type="IntAct" id="P0C2H7">
    <property type="interactions" value="3"/>
</dbReference>
<dbReference type="MINT" id="P0C2H7"/>
<dbReference type="STRING" id="4932.YDR471W"/>
<dbReference type="CarbonylDB" id="P0C2H7"/>
<dbReference type="iPTMnet" id="P0C2H7"/>
<dbReference type="PaxDb" id="4932-YDR471W"/>
<dbReference type="PeptideAtlas" id="P0C2H7"/>
<dbReference type="TopDownProteomics" id="P0C2H7"/>
<dbReference type="EnsemblFungi" id="YDR471W_mRNA">
    <property type="protein sequence ID" value="YDR471W"/>
    <property type="gene ID" value="YDR471W"/>
</dbReference>
<dbReference type="GeneID" id="852082"/>
<dbReference type="KEGG" id="sce:YDR471W"/>
<dbReference type="AGR" id="SGD:S000002879"/>
<dbReference type="SGD" id="S000002879">
    <property type="gene designation" value="RPL27B"/>
</dbReference>
<dbReference type="VEuPathDB" id="FungiDB:YDR471W"/>
<dbReference type="eggNOG" id="KOG3418">
    <property type="taxonomic scope" value="Eukaryota"/>
</dbReference>
<dbReference type="GeneTree" id="ENSGT00390000010721"/>
<dbReference type="HOGENOM" id="CLU_067359_0_1_1"/>
<dbReference type="InParanoid" id="P0C2H7"/>
<dbReference type="OMA" id="MKVVNYS"/>
<dbReference type="OrthoDB" id="2365484at2759"/>
<dbReference type="BioCyc" id="YEAST:G3O-29998-MONOMER"/>
<dbReference type="BioGRID-ORCS" id="852082">
    <property type="hits" value="2 hits in 10 CRISPR screens"/>
</dbReference>
<dbReference type="PRO" id="PR:P0C2H7"/>
<dbReference type="Proteomes" id="UP000002311">
    <property type="component" value="Chromosome IV"/>
</dbReference>
<dbReference type="RNAct" id="P0C2H7">
    <property type="molecule type" value="protein"/>
</dbReference>
<dbReference type="GO" id="GO:0005829">
    <property type="term" value="C:cytosol"/>
    <property type="evidence" value="ECO:0000304"/>
    <property type="project" value="Reactome"/>
</dbReference>
<dbReference type="GO" id="GO:0022625">
    <property type="term" value="C:cytosolic large ribosomal subunit"/>
    <property type="evidence" value="ECO:0000318"/>
    <property type="project" value="GO_Central"/>
</dbReference>
<dbReference type="GO" id="GO:0030687">
    <property type="term" value="C:preribosome, large subunit precursor"/>
    <property type="evidence" value="ECO:0000314"/>
    <property type="project" value="SGD"/>
</dbReference>
<dbReference type="GO" id="GO:0003735">
    <property type="term" value="F:structural constituent of ribosome"/>
    <property type="evidence" value="ECO:0000318"/>
    <property type="project" value="GO_Central"/>
</dbReference>
<dbReference type="GO" id="GO:0002181">
    <property type="term" value="P:cytoplasmic translation"/>
    <property type="evidence" value="ECO:0000305"/>
    <property type="project" value="SGD"/>
</dbReference>
<dbReference type="CDD" id="cd06090">
    <property type="entry name" value="KOW_RPL27"/>
    <property type="match status" value="1"/>
</dbReference>
<dbReference type="FunFam" id="2.30.30.770:FF:000001">
    <property type="entry name" value="60S ribosomal protein L27"/>
    <property type="match status" value="1"/>
</dbReference>
<dbReference type="Gene3D" id="2.30.30.770">
    <property type="match status" value="1"/>
</dbReference>
<dbReference type="InterPro" id="IPR001141">
    <property type="entry name" value="Ribosomal_eL27"/>
</dbReference>
<dbReference type="InterPro" id="IPR018262">
    <property type="entry name" value="Ribosomal_eL27_CS"/>
</dbReference>
<dbReference type="InterPro" id="IPR041991">
    <property type="entry name" value="Ribosomal_eL27_KOW"/>
</dbReference>
<dbReference type="InterPro" id="IPR038655">
    <property type="entry name" value="Ribosomal_eL27_sf"/>
</dbReference>
<dbReference type="InterPro" id="IPR008991">
    <property type="entry name" value="Translation_prot_SH3-like_sf"/>
</dbReference>
<dbReference type="PANTHER" id="PTHR10497">
    <property type="entry name" value="60S RIBOSOMAL PROTEIN L27"/>
    <property type="match status" value="1"/>
</dbReference>
<dbReference type="Pfam" id="PF01777">
    <property type="entry name" value="Ribosomal_L27e"/>
    <property type="match status" value="1"/>
</dbReference>
<dbReference type="SUPFAM" id="SSF50104">
    <property type="entry name" value="Translation proteins SH3-like domain"/>
    <property type="match status" value="1"/>
</dbReference>
<dbReference type="PROSITE" id="PS01107">
    <property type="entry name" value="RIBOSOMAL_L27E"/>
    <property type="match status" value="1"/>
</dbReference>
<reference key="1">
    <citation type="journal article" date="1997" name="Nature">
        <title>The nucleotide sequence of Saccharomyces cerevisiae chromosome IV.</title>
        <authorList>
            <person name="Jacq C."/>
            <person name="Alt-Moerbe J."/>
            <person name="Andre B."/>
            <person name="Arnold W."/>
            <person name="Bahr A."/>
            <person name="Ballesta J.P.G."/>
            <person name="Bargues M."/>
            <person name="Baron L."/>
            <person name="Becker A."/>
            <person name="Biteau N."/>
            <person name="Bloecker H."/>
            <person name="Blugeon C."/>
            <person name="Boskovic J."/>
            <person name="Brandt P."/>
            <person name="Brueckner M."/>
            <person name="Buitrago M.J."/>
            <person name="Coster F."/>
            <person name="Delaveau T."/>
            <person name="del Rey F."/>
            <person name="Dujon B."/>
            <person name="Eide L.G."/>
            <person name="Garcia-Cantalejo J.M."/>
            <person name="Goffeau A."/>
            <person name="Gomez-Peris A."/>
            <person name="Granotier C."/>
            <person name="Hanemann V."/>
            <person name="Hankeln T."/>
            <person name="Hoheisel J.D."/>
            <person name="Jaeger W."/>
            <person name="Jimenez A."/>
            <person name="Jonniaux J.-L."/>
            <person name="Kraemer C."/>
            <person name="Kuester H."/>
            <person name="Laamanen P."/>
            <person name="Legros Y."/>
            <person name="Louis E.J."/>
            <person name="Moeller-Rieker S."/>
            <person name="Monnet A."/>
            <person name="Moro M."/>
            <person name="Mueller-Auer S."/>
            <person name="Nussbaumer B."/>
            <person name="Paricio N."/>
            <person name="Paulin L."/>
            <person name="Perea J."/>
            <person name="Perez-Alonso M."/>
            <person name="Perez-Ortin J.E."/>
            <person name="Pohl T.M."/>
            <person name="Prydz H."/>
            <person name="Purnelle B."/>
            <person name="Rasmussen S.W."/>
            <person name="Remacha M.A."/>
            <person name="Revuelta J.L."/>
            <person name="Rieger M."/>
            <person name="Salom D."/>
            <person name="Saluz H.P."/>
            <person name="Saiz J.E."/>
            <person name="Saren A.-M."/>
            <person name="Schaefer M."/>
            <person name="Scharfe M."/>
            <person name="Schmidt E.R."/>
            <person name="Schneider C."/>
            <person name="Scholler P."/>
            <person name="Schwarz S."/>
            <person name="Soler-Mira A."/>
            <person name="Urrestarazu L.A."/>
            <person name="Verhasselt P."/>
            <person name="Vissers S."/>
            <person name="Voet M."/>
            <person name="Volckaert G."/>
            <person name="Wagner G."/>
            <person name="Wambutt R."/>
            <person name="Wedler E."/>
            <person name="Wedler H."/>
            <person name="Woelfl S."/>
            <person name="Harris D.E."/>
            <person name="Bowman S."/>
            <person name="Brown D."/>
            <person name="Churcher C.M."/>
            <person name="Connor R."/>
            <person name="Dedman K."/>
            <person name="Gentles S."/>
            <person name="Hamlin N."/>
            <person name="Hunt S."/>
            <person name="Jones L."/>
            <person name="McDonald S."/>
            <person name="Murphy L.D."/>
            <person name="Niblett D."/>
            <person name="Odell C."/>
            <person name="Oliver K."/>
            <person name="Rajandream M.A."/>
            <person name="Richards C."/>
            <person name="Shore L."/>
            <person name="Walsh S.V."/>
            <person name="Barrell B.G."/>
            <person name="Dietrich F.S."/>
            <person name="Mulligan J.T."/>
            <person name="Allen E."/>
            <person name="Araujo R."/>
            <person name="Aviles E."/>
            <person name="Berno A."/>
            <person name="Carpenter J."/>
            <person name="Chen E."/>
            <person name="Cherry J.M."/>
            <person name="Chung E."/>
            <person name="Duncan M."/>
            <person name="Hunicke-Smith S."/>
            <person name="Hyman R.W."/>
            <person name="Komp C."/>
            <person name="Lashkari D."/>
            <person name="Lew H."/>
            <person name="Lin D."/>
            <person name="Mosedale D."/>
            <person name="Nakahara K."/>
            <person name="Namath A."/>
            <person name="Oefner P."/>
            <person name="Oh C."/>
            <person name="Petel F.X."/>
            <person name="Roberts D."/>
            <person name="Schramm S."/>
            <person name="Schroeder M."/>
            <person name="Shogren T."/>
            <person name="Shroff N."/>
            <person name="Winant A."/>
            <person name="Yelton M.A."/>
            <person name="Botstein D."/>
            <person name="Davis R.W."/>
            <person name="Johnston M."/>
            <person name="Andrews S."/>
            <person name="Brinkman R."/>
            <person name="Cooper J."/>
            <person name="Ding H."/>
            <person name="Du Z."/>
            <person name="Favello A."/>
            <person name="Fulton L."/>
            <person name="Gattung S."/>
            <person name="Greco T."/>
            <person name="Hallsworth K."/>
            <person name="Hawkins J."/>
            <person name="Hillier L.W."/>
            <person name="Jier M."/>
            <person name="Johnson D."/>
            <person name="Johnston L."/>
            <person name="Kirsten J."/>
            <person name="Kucaba T."/>
            <person name="Langston Y."/>
            <person name="Latreille P."/>
            <person name="Le T."/>
            <person name="Mardis E."/>
            <person name="Menezes S."/>
            <person name="Miller N."/>
            <person name="Nhan M."/>
            <person name="Pauley A."/>
            <person name="Peluso D."/>
            <person name="Rifkin L."/>
            <person name="Riles L."/>
            <person name="Taich A."/>
            <person name="Trevaskis E."/>
            <person name="Vignati D."/>
            <person name="Wilcox L."/>
            <person name="Wohldman P."/>
            <person name="Vaudin M."/>
            <person name="Wilson R."/>
            <person name="Waterston R."/>
            <person name="Albermann K."/>
            <person name="Hani J."/>
            <person name="Heumann K."/>
            <person name="Kleine K."/>
            <person name="Mewes H.-W."/>
            <person name="Zollner A."/>
            <person name="Zaccaria P."/>
        </authorList>
    </citation>
    <scope>NUCLEOTIDE SEQUENCE [LARGE SCALE GENOMIC DNA]</scope>
    <source>
        <strain>ATCC 204508 / S288c</strain>
    </source>
</reference>
<reference key="2">
    <citation type="journal article" date="2014" name="G3 (Bethesda)">
        <title>The reference genome sequence of Saccharomyces cerevisiae: Then and now.</title>
        <authorList>
            <person name="Engel S.R."/>
            <person name="Dietrich F.S."/>
            <person name="Fisk D.G."/>
            <person name="Binkley G."/>
            <person name="Balakrishnan R."/>
            <person name="Costanzo M.C."/>
            <person name="Dwight S.S."/>
            <person name="Hitz B.C."/>
            <person name="Karra K."/>
            <person name="Nash R.S."/>
            <person name="Weng S."/>
            <person name="Wong E.D."/>
            <person name="Lloyd P."/>
            <person name="Skrzypek M.S."/>
            <person name="Miyasato S.R."/>
            <person name="Simison M."/>
            <person name="Cherry J.M."/>
        </authorList>
    </citation>
    <scope>GENOME REANNOTATION</scope>
    <source>
        <strain>ATCC 204508 / S288c</strain>
    </source>
</reference>
<reference key="3">
    <citation type="journal article" date="1998" name="Yeast">
        <title>The list of cytoplasmic ribosomal proteins of Saccharomyces cerevisiae.</title>
        <authorList>
            <person name="Planta R.J."/>
            <person name="Mager W.H."/>
        </authorList>
    </citation>
    <scope>NOMENCLATURE</scope>
    <scope>SUBUNIT</scope>
</reference>
<reference key="4">
    <citation type="journal article" date="2003" name="Nature">
        <title>Global analysis of protein localization in budding yeast.</title>
        <authorList>
            <person name="Huh W.-K."/>
            <person name="Falvo J.V."/>
            <person name="Gerke L.C."/>
            <person name="Carroll A.S."/>
            <person name="Howson R.W."/>
            <person name="Weissman J.S."/>
            <person name="O'Shea E.K."/>
        </authorList>
    </citation>
    <scope>SUBCELLULAR LOCATION [LARGE SCALE ANALYSIS]</scope>
</reference>
<reference key="5">
    <citation type="journal article" date="2003" name="Nature">
        <title>Global analysis of protein expression in yeast.</title>
        <authorList>
            <person name="Ghaemmaghami S."/>
            <person name="Huh W.-K."/>
            <person name="Bower K."/>
            <person name="Howson R.W."/>
            <person name="Belle A."/>
            <person name="Dephoure N."/>
            <person name="O'Shea E.K."/>
            <person name="Weissman J.S."/>
        </authorList>
    </citation>
    <scope>LEVEL OF PROTEIN EXPRESSION [LARGE SCALE ANALYSIS]</scope>
</reference>
<reference key="6">
    <citation type="journal article" date="2011" name="Science">
        <title>The structure of the eukaryotic ribosome at 3.0 A resolution.</title>
        <authorList>
            <person name="Ben-Shem A."/>
            <person name="Garreau de Loubresse N."/>
            <person name="Melnikov S."/>
            <person name="Jenner L."/>
            <person name="Yusupova G."/>
            <person name="Yusupov M."/>
        </authorList>
    </citation>
    <scope>SUBUNIT</scope>
    <scope>SUBCELLULAR LOCATION</scope>
</reference>
<reference key="7">
    <citation type="journal article" date="2014" name="Curr. Opin. Struct. Biol.">
        <title>A new system for naming ribosomal proteins.</title>
        <authorList>
            <person name="Ban N."/>
            <person name="Beckmann R."/>
            <person name="Cate J.H.D."/>
            <person name="Dinman J.D."/>
            <person name="Dragon F."/>
            <person name="Ellis S.R."/>
            <person name="Lafontaine D.L.J."/>
            <person name="Lindahl L."/>
            <person name="Liljas A."/>
            <person name="Lipton J.M."/>
            <person name="McAlear M.A."/>
            <person name="Moore P.B."/>
            <person name="Noller H.F."/>
            <person name="Ortega J."/>
            <person name="Panse V.G."/>
            <person name="Ramakrishnan V."/>
            <person name="Spahn C.M.T."/>
            <person name="Steitz T.A."/>
            <person name="Tchorzewski M."/>
            <person name="Tollervey D."/>
            <person name="Warren A.J."/>
            <person name="Williamson J.R."/>
            <person name="Wilson D."/>
            <person name="Yonath A."/>
            <person name="Yusupov M."/>
        </authorList>
    </citation>
    <scope>NOMENCLATURE</scope>
</reference>
<name>RL27B_YEAST</name>
<evidence type="ECO:0000269" key="1">
    <source>
    </source>
</evidence>
<evidence type="ECO:0000269" key="2">
    <source>
    </source>
</evidence>
<evidence type="ECO:0000269" key="3">
    <source>
    </source>
</evidence>
<evidence type="ECO:0000303" key="4">
    <source>
    </source>
</evidence>
<evidence type="ECO:0000303" key="5">
    <source>
    </source>
</evidence>
<evidence type="ECO:0000305" key="6"/>
<evidence type="ECO:0000305" key="7">
    <source>
    </source>
</evidence>
<evidence type="ECO:0000305" key="8">
    <source>
    </source>
</evidence>
<protein>
    <recommendedName>
        <fullName evidence="4">Large ribosomal subunit protein eL27B</fullName>
    </recommendedName>
    <alternativeName>
        <fullName evidence="5">60S ribosomal protein L27-B</fullName>
    </alternativeName>
</protein>